<reference key="1">
    <citation type="journal article" date="2005" name="Nature">
        <title>Genomic sequence of the pathogenic and allergenic filamentous fungus Aspergillus fumigatus.</title>
        <authorList>
            <person name="Nierman W.C."/>
            <person name="Pain A."/>
            <person name="Anderson M.J."/>
            <person name="Wortman J.R."/>
            <person name="Kim H.S."/>
            <person name="Arroyo J."/>
            <person name="Berriman M."/>
            <person name="Abe K."/>
            <person name="Archer D.B."/>
            <person name="Bermejo C."/>
            <person name="Bennett J.W."/>
            <person name="Bowyer P."/>
            <person name="Chen D."/>
            <person name="Collins M."/>
            <person name="Coulsen R."/>
            <person name="Davies R."/>
            <person name="Dyer P.S."/>
            <person name="Farman M.L."/>
            <person name="Fedorova N."/>
            <person name="Fedorova N.D."/>
            <person name="Feldblyum T.V."/>
            <person name="Fischer R."/>
            <person name="Fosker N."/>
            <person name="Fraser A."/>
            <person name="Garcia J.L."/>
            <person name="Garcia M.J."/>
            <person name="Goble A."/>
            <person name="Goldman G.H."/>
            <person name="Gomi K."/>
            <person name="Griffith-Jones S."/>
            <person name="Gwilliam R."/>
            <person name="Haas B.J."/>
            <person name="Haas H."/>
            <person name="Harris D.E."/>
            <person name="Horiuchi H."/>
            <person name="Huang J."/>
            <person name="Humphray S."/>
            <person name="Jimenez J."/>
            <person name="Keller N."/>
            <person name="Khouri H."/>
            <person name="Kitamoto K."/>
            <person name="Kobayashi T."/>
            <person name="Konzack S."/>
            <person name="Kulkarni R."/>
            <person name="Kumagai T."/>
            <person name="Lafton A."/>
            <person name="Latge J.-P."/>
            <person name="Li W."/>
            <person name="Lord A."/>
            <person name="Lu C."/>
            <person name="Majoros W.H."/>
            <person name="May G.S."/>
            <person name="Miller B.L."/>
            <person name="Mohamoud Y."/>
            <person name="Molina M."/>
            <person name="Monod M."/>
            <person name="Mouyna I."/>
            <person name="Mulligan S."/>
            <person name="Murphy L.D."/>
            <person name="O'Neil S."/>
            <person name="Paulsen I."/>
            <person name="Penalva M.A."/>
            <person name="Pertea M."/>
            <person name="Price C."/>
            <person name="Pritchard B.L."/>
            <person name="Quail M.A."/>
            <person name="Rabbinowitsch E."/>
            <person name="Rawlins N."/>
            <person name="Rajandream M.A."/>
            <person name="Reichard U."/>
            <person name="Renauld H."/>
            <person name="Robson G.D."/>
            <person name="Rodriguez de Cordoba S."/>
            <person name="Rodriguez-Pena J.M."/>
            <person name="Ronning C.M."/>
            <person name="Rutter S."/>
            <person name="Salzberg S.L."/>
            <person name="Sanchez M."/>
            <person name="Sanchez-Ferrero J.C."/>
            <person name="Saunders D."/>
            <person name="Seeger K."/>
            <person name="Squares R."/>
            <person name="Squares S."/>
            <person name="Takeuchi M."/>
            <person name="Tekaia F."/>
            <person name="Turner G."/>
            <person name="Vazquez de Aldana C.R."/>
            <person name="Weidman J."/>
            <person name="White O."/>
            <person name="Woodward J.R."/>
            <person name="Yu J.-H."/>
            <person name="Fraser C.M."/>
            <person name="Galagan J.E."/>
            <person name="Asai K."/>
            <person name="Machida M."/>
            <person name="Hall N."/>
            <person name="Barrell B.G."/>
            <person name="Denning D.W."/>
        </authorList>
    </citation>
    <scope>NUCLEOTIDE SEQUENCE [LARGE SCALE GENOMIC DNA]</scope>
    <source>
        <strain>ATCC MYA-4609 / CBS 101355 / FGSC A1100 / Af293</strain>
    </source>
</reference>
<sequence>MAPNAATKKRAAARDDDFVLTLSDDENDIFENGVEEDGDNAQEDTLSSSKKRKREAAEAPKGKNKKQKQLKKSKKGESAAGAVSDDQSSEEDEAEAMDAGEDDGALDSEFEFDVGGNANTGVIEGFDGWEARNGASLADAPKNGDKKAVDIDDIISRRKAKKEAELKKKQQKEKKRREEEGEEESEGEDADSDGGMSVDFQDDELLAADGFGMGADGADESDDDVENGSNDSDDSEGKGSEDEESGDEYNDDDAASDNDSVATPVHHPDDEAASDEESEAESEVDAEEAEKRKAFFAPEEKSTAVSTFNRSFQDFNLSRPILRGLASVNFTTPTPIQQKTIPVALLGKDIVGSAVTGSGKTAAFVVPILERLLFRPRKVPTSRVAILMPTRELAVQCYNVATKLATHTDITFCQLVGGFSLREQENILKKRPDVIIATPGRFIDHMRNSPSFTVDTLEILVLDEADRMLEDGFADELNEILTTIPKSRQTMLFSATMTDSVDKLIRVGLNRPVRLMVDSKKNTSMNLTQEFVRLRPGREDKRLGYLLYLCNEIYTGRVIVFFRQKREAHRVRIVFGLLGLKAAELHGSMSQEQRIKSVENFREGKVAFLLATDLASRGLDIKGVETVINYEAPQSHEIYLHRVGRTARAGRSGRACTIAAEPDRKIVKSAVKAGKAQGAKIVSRVVDPAVADEWAAKAKGLEDEIEEVLQEEKLEKQMAQAEMQVTKGENLIKHEAEIMSRPKRTWFETERDKRAARKLGATELNGPSKKDKVKLSNKDKKRLDDARQRHEGNIGWKKGKADREAPKQGKNKGGKTKSDKKNKIKMKGKK</sequence>
<protein>
    <recommendedName>
        <fullName>ATP-dependent RNA helicase drs1</fullName>
        <ecNumber>3.6.4.13</ecNumber>
    </recommendedName>
</protein>
<comment type="function">
    <text evidence="1">ATP-binding RNA helicase involved in ribosome assembly.</text>
</comment>
<comment type="catalytic activity">
    <reaction>
        <text>ATP + H2O = ADP + phosphate + H(+)</text>
        <dbReference type="Rhea" id="RHEA:13065"/>
        <dbReference type="ChEBI" id="CHEBI:15377"/>
        <dbReference type="ChEBI" id="CHEBI:15378"/>
        <dbReference type="ChEBI" id="CHEBI:30616"/>
        <dbReference type="ChEBI" id="CHEBI:43474"/>
        <dbReference type="ChEBI" id="CHEBI:456216"/>
        <dbReference type="EC" id="3.6.4.13"/>
    </reaction>
</comment>
<comment type="subunit">
    <text evidence="1">Associates with pre-ribosomal particles.</text>
</comment>
<comment type="subcellular location">
    <subcellularLocation>
        <location evidence="1">Nucleus</location>
        <location evidence="1">Nucleolus</location>
    </subcellularLocation>
</comment>
<comment type="domain">
    <text>The Q motif is unique to and characteristic of the DEAD box family of RNA helicases and controls ATP binding and hydrolysis.</text>
</comment>
<comment type="similarity">
    <text evidence="6">Belongs to the DEAD box helicase family. DDX27/DRS1 subfamily.</text>
</comment>
<name>DRS1_ASPFU</name>
<accession>Q4WRV2</accession>
<proteinExistence type="inferred from homology"/>
<keyword id="KW-0067">ATP-binding</keyword>
<keyword id="KW-0175">Coiled coil</keyword>
<keyword id="KW-0347">Helicase</keyword>
<keyword id="KW-0378">Hydrolase</keyword>
<keyword id="KW-0547">Nucleotide-binding</keyword>
<keyword id="KW-0539">Nucleus</keyword>
<keyword id="KW-1185">Reference proteome</keyword>
<keyword id="KW-0690">Ribosome biogenesis</keyword>
<keyword id="KW-0694">RNA-binding</keyword>
<gene>
    <name type="primary">drs1</name>
    <name type="ORF">AFUA_1G14990</name>
</gene>
<evidence type="ECO:0000250" key="1"/>
<evidence type="ECO:0000255" key="2"/>
<evidence type="ECO:0000255" key="3">
    <source>
        <dbReference type="PROSITE-ProRule" id="PRU00541"/>
    </source>
</evidence>
<evidence type="ECO:0000255" key="4">
    <source>
        <dbReference type="PROSITE-ProRule" id="PRU00542"/>
    </source>
</evidence>
<evidence type="ECO:0000256" key="5">
    <source>
        <dbReference type="SAM" id="MobiDB-lite"/>
    </source>
</evidence>
<evidence type="ECO:0000305" key="6"/>
<organism>
    <name type="scientific">Aspergillus fumigatus (strain ATCC MYA-4609 / CBS 101355 / FGSC A1100 / Af293)</name>
    <name type="common">Neosartorya fumigata</name>
    <dbReference type="NCBI Taxonomy" id="330879"/>
    <lineage>
        <taxon>Eukaryota</taxon>
        <taxon>Fungi</taxon>
        <taxon>Dikarya</taxon>
        <taxon>Ascomycota</taxon>
        <taxon>Pezizomycotina</taxon>
        <taxon>Eurotiomycetes</taxon>
        <taxon>Eurotiomycetidae</taxon>
        <taxon>Eurotiales</taxon>
        <taxon>Aspergillaceae</taxon>
        <taxon>Aspergillus</taxon>
        <taxon>Aspergillus subgen. Fumigati</taxon>
    </lineage>
</organism>
<feature type="chain" id="PRO_0000232240" description="ATP-dependent RNA helicase drs1">
    <location>
        <begin position="1"/>
        <end position="830"/>
    </location>
</feature>
<feature type="domain" description="Helicase ATP-binding" evidence="3">
    <location>
        <begin position="341"/>
        <end position="515"/>
    </location>
</feature>
<feature type="domain" description="Helicase C-terminal" evidence="4">
    <location>
        <begin position="542"/>
        <end position="689"/>
    </location>
</feature>
<feature type="region of interest" description="Disordered" evidence="5">
    <location>
        <begin position="1"/>
        <end position="117"/>
    </location>
</feature>
<feature type="region of interest" description="Disordered" evidence="5">
    <location>
        <begin position="159"/>
        <end position="295"/>
    </location>
</feature>
<feature type="region of interest" description="Disordered" evidence="5">
    <location>
        <begin position="757"/>
        <end position="830"/>
    </location>
</feature>
<feature type="coiled-coil region" evidence="2">
    <location>
        <begin position="689"/>
        <end position="735"/>
    </location>
</feature>
<feature type="short sequence motif" description="Q motif">
    <location>
        <begin position="310"/>
        <end position="338"/>
    </location>
</feature>
<feature type="short sequence motif" description="DEAD box">
    <location>
        <begin position="463"/>
        <end position="466"/>
    </location>
</feature>
<feature type="compositionally biased region" description="Acidic residues" evidence="5">
    <location>
        <begin position="23"/>
        <end position="42"/>
    </location>
</feature>
<feature type="compositionally biased region" description="Basic residues" evidence="5">
    <location>
        <begin position="62"/>
        <end position="74"/>
    </location>
</feature>
<feature type="compositionally biased region" description="Acidic residues" evidence="5">
    <location>
        <begin position="87"/>
        <end position="112"/>
    </location>
</feature>
<feature type="compositionally biased region" description="Basic and acidic residues" evidence="5">
    <location>
        <begin position="159"/>
        <end position="168"/>
    </location>
</feature>
<feature type="compositionally biased region" description="Acidic residues" evidence="5">
    <location>
        <begin position="180"/>
        <end position="192"/>
    </location>
</feature>
<feature type="compositionally biased region" description="Acidic residues" evidence="5">
    <location>
        <begin position="217"/>
        <end position="234"/>
    </location>
</feature>
<feature type="compositionally biased region" description="Acidic residues" evidence="5">
    <location>
        <begin position="241"/>
        <end position="256"/>
    </location>
</feature>
<feature type="compositionally biased region" description="Acidic residues" evidence="5">
    <location>
        <begin position="271"/>
        <end position="288"/>
    </location>
</feature>
<feature type="compositionally biased region" description="Basic and acidic residues" evidence="5">
    <location>
        <begin position="768"/>
        <end position="792"/>
    </location>
</feature>
<feature type="binding site" evidence="3">
    <location>
        <begin position="354"/>
        <end position="361"/>
    </location>
    <ligand>
        <name>ATP</name>
        <dbReference type="ChEBI" id="CHEBI:30616"/>
    </ligand>
</feature>
<dbReference type="EC" id="3.6.4.13"/>
<dbReference type="EMBL" id="AAHF01000004">
    <property type="protein sequence ID" value="EAL90830.1"/>
    <property type="molecule type" value="Genomic_DNA"/>
</dbReference>
<dbReference type="RefSeq" id="XP_752868.1">
    <property type="nucleotide sequence ID" value="XM_747775.1"/>
</dbReference>
<dbReference type="SMR" id="Q4WRV2"/>
<dbReference type="FunCoup" id="Q4WRV2">
    <property type="interactions" value="883"/>
</dbReference>
<dbReference type="STRING" id="330879.Q4WRV2"/>
<dbReference type="EnsemblFungi" id="EAL90830">
    <property type="protein sequence ID" value="EAL90830"/>
    <property type="gene ID" value="AFUA_1G14990"/>
</dbReference>
<dbReference type="GeneID" id="3509891"/>
<dbReference type="KEGG" id="afm:AFUA_1G14990"/>
<dbReference type="VEuPathDB" id="FungiDB:Afu1g14990"/>
<dbReference type="eggNOG" id="KOG0338">
    <property type="taxonomic scope" value="Eukaryota"/>
</dbReference>
<dbReference type="HOGENOM" id="CLU_003041_3_1_1"/>
<dbReference type="InParanoid" id="Q4WRV2"/>
<dbReference type="OMA" id="MIDPPKQ"/>
<dbReference type="OrthoDB" id="10259843at2759"/>
<dbReference type="Proteomes" id="UP000002530">
    <property type="component" value="Chromosome 1"/>
</dbReference>
<dbReference type="GO" id="GO:0005730">
    <property type="term" value="C:nucleolus"/>
    <property type="evidence" value="ECO:0000318"/>
    <property type="project" value="GO_Central"/>
</dbReference>
<dbReference type="GO" id="GO:0030687">
    <property type="term" value="C:preribosome, large subunit precursor"/>
    <property type="evidence" value="ECO:0007669"/>
    <property type="project" value="EnsemblFungi"/>
</dbReference>
<dbReference type="GO" id="GO:0005524">
    <property type="term" value="F:ATP binding"/>
    <property type="evidence" value="ECO:0007669"/>
    <property type="project" value="UniProtKB-KW"/>
</dbReference>
<dbReference type="GO" id="GO:0016887">
    <property type="term" value="F:ATP hydrolysis activity"/>
    <property type="evidence" value="ECO:0007669"/>
    <property type="project" value="RHEA"/>
</dbReference>
<dbReference type="GO" id="GO:0003723">
    <property type="term" value="F:RNA binding"/>
    <property type="evidence" value="ECO:0007669"/>
    <property type="project" value="UniProtKB-KW"/>
</dbReference>
<dbReference type="GO" id="GO:0003724">
    <property type="term" value="F:RNA helicase activity"/>
    <property type="evidence" value="ECO:0007669"/>
    <property type="project" value="UniProtKB-EC"/>
</dbReference>
<dbReference type="GO" id="GO:0000027">
    <property type="term" value="P:ribosomal large subunit assembly"/>
    <property type="evidence" value="ECO:0007669"/>
    <property type="project" value="EnsemblFungi"/>
</dbReference>
<dbReference type="GO" id="GO:0006364">
    <property type="term" value="P:rRNA processing"/>
    <property type="evidence" value="ECO:0007669"/>
    <property type="project" value="EnsemblFungi"/>
</dbReference>
<dbReference type="CDD" id="cd17947">
    <property type="entry name" value="DEADc_DDX27"/>
    <property type="match status" value="1"/>
</dbReference>
<dbReference type="CDD" id="cd18787">
    <property type="entry name" value="SF2_C_DEAD"/>
    <property type="match status" value="1"/>
</dbReference>
<dbReference type="Gene3D" id="3.40.50.300">
    <property type="entry name" value="P-loop containing nucleotide triphosphate hydrolases"/>
    <property type="match status" value="2"/>
</dbReference>
<dbReference type="InterPro" id="IPR011545">
    <property type="entry name" value="DEAD/DEAH_box_helicase_dom"/>
</dbReference>
<dbReference type="InterPro" id="IPR050079">
    <property type="entry name" value="DEAD_box_RNA_helicase"/>
</dbReference>
<dbReference type="InterPro" id="IPR014001">
    <property type="entry name" value="Helicase_ATP-bd"/>
</dbReference>
<dbReference type="InterPro" id="IPR001650">
    <property type="entry name" value="Helicase_C-like"/>
</dbReference>
<dbReference type="InterPro" id="IPR027417">
    <property type="entry name" value="P-loop_NTPase"/>
</dbReference>
<dbReference type="InterPro" id="IPR000629">
    <property type="entry name" value="RNA-helicase_DEAD-box_CS"/>
</dbReference>
<dbReference type="InterPro" id="IPR014014">
    <property type="entry name" value="RNA_helicase_DEAD_Q_motif"/>
</dbReference>
<dbReference type="PANTHER" id="PTHR47959:SF1">
    <property type="entry name" value="ATP-DEPENDENT RNA HELICASE DBPA"/>
    <property type="match status" value="1"/>
</dbReference>
<dbReference type="PANTHER" id="PTHR47959">
    <property type="entry name" value="ATP-DEPENDENT RNA HELICASE RHLE-RELATED"/>
    <property type="match status" value="1"/>
</dbReference>
<dbReference type="Pfam" id="PF00270">
    <property type="entry name" value="DEAD"/>
    <property type="match status" value="1"/>
</dbReference>
<dbReference type="Pfam" id="PF00271">
    <property type="entry name" value="Helicase_C"/>
    <property type="match status" value="1"/>
</dbReference>
<dbReference type="SMART" id="SM00487">
    <property type="entry name" value="DEXDc"/>
    <property type="match status" value="1"/>
</dbReference>
<dbReference type="SMART" id="SM00490">
    <property type="entry name" value="HELICc"/>
    <property type="match status" value="1"/>
</dbReference>
<dbReference type="SUPFAM" id="SSF52540">
    <property type="entry name" value="P-loop containing nucleoside triphosphate hydrolases"/>
    <property type="match status" value="2"/>
</dbReference>
<dbReference type="PROSITE" id="PS00039">
    <property type="entry name" value="DEAD_ATP_HELICASE"/>
    <property type="match status" value="1"/>
</dbReference>
<dbReference type="PROSITE" id="PS51192">
    <property type="entry name" value="HELICASE_ATP_BIND_1"/>
    <property type="match status" value="1"/>
</dbReference>
<dbReference type="PROSITE" id="PS51194">
    <property type="entry name" value="HELICASE_CTER"/>
    <property type="match status" value="1"/>
</dbReference>
<dbReference type="PROSITE" id="PS51195">
    <property type="entry name" value="Q_MOTIF"/>
    <property type="match status" value="1"/>
</dbReference>